<dbReference type="EMBL" id="AJ409329">
    <property type="protein sequence ID" value="CAC35061.1"/>
    <property type="molecule type" value="Genomic_DNA"/>
</dbReference>
<dbReference type="EMBL" id="AE017221">
    <property type="protein sequence ID" value="AAS80857.1"/>
    <property type="molecule type" value="Genomic_DNA"/>
</dbReference>
<dbReference type="RefSeq" id="WP_011172954.1">
    <property type="nucleotide sequence ID" value="NC_005835.1"/>
</dbReference>
<dbReference type="PDB" id="4KVB">
    <property type="method" value="X-ray"/>
    <property type="resolution" value="4.20 A"/>
    <property type="chains" value="B=1-256"/>
</dbReference>
<dbReference type="PDB" id="4V4G">
    <property type="method" value="X-ray"/>
    <property type="resolution" value="11.50 A"/>
    <property type="chains" value="B=7-240"/>
</dbReference>
<dbReference type="PDB" id="4V4I">
    <property type="method" value="X-ray"/>
    <property type="resolution" value="3.71 A"/>
    <property type="chains" value="c=1-256"/>
</dbReference>
<dbReference type="PDB" id="4V4J">
    <property type="method" value="X-ray"/>
    <property type="resolution" value="3.83 A"/>
    <property type="chains" value="c=1-256"/>
</dbReference>
<dbReference type="PDB" id="4V63">
    <property type="method" value="X-ray"/>
    <property type="resolution" value="3.21 A"/>
    <property type="chains" value="AB/CB=1-256"/>
</dbReference>
<dbReference type="PDB" id="4V67">
    <property type="method" value="X-ray"/>
    <property type="resolution" value="3.00 A"/>
    <property type="chains" value="AB/CB=1-256"/>
</dbReference>
<dbReference type="PDB" id="4V7P">
    <property type="method" value="X-ray"/>
    <property type="resolution" value="3.62 A"/>
    <property type="chains" value="AB/DB=7-240"/>
</dbReference>
<dbReference type="PDB" id="4V83">
    <property type="method" value="X-ray"/>
    <property type="resolution" value="3.50 A"/>
    <property type="chains" value="AB/CB=7-240"/>
</dbReference>
<dbReference type="PDB" id="4V84">
    <property type="method" value="X-ray"/>
    <property type="resolution" value="3.40 A"/>
    <property type="chains" value="AB/CB=7-240"/>
</dbReference>
<dbReference type="PDB" id="4V9J">
    <property type="method" value="X-ray"/>
    <property type="resolution" value="3.86 A"/>
    <property type="chains" value="AB/CB=7-241"/>
</dbReference>
<dbReference type="PDB" id="4V9K">
    <property type="method" value="X-ray"/>
    <property type="resolution" value="3.50 A"/>
    <property type="chains" value="AB/CB=7-241"/>
</dbReference>
<dbReference type="PDB" id="4V9L">
    <property type="method" value="X-ray"/>
    <property type="resolution" value="3.50 A"/>
    <property type="chains" value="AB/CB=7-241"/>
</dbReference>
<dbReference type="PDB" id="4V9M">
    <property type="method" value="X-ray"/>
    <property type="resolution" value="4.00 A"/>
    <property type="chains" value="AB/CB=7-241"/>
</dbReference>
<dbReference type="PDB" id="4V9N">
    <property type="method" value="X-ray"/>
    <property type="resolution" value="3.40 A"/>
    <property type="chains" value="AB/CB=7-240"/>
</dbReference>
<dbReference type="PDB" id="4V9Q">
    <property type="method" value="X-ray"/>
    <property type="resolution" value="3.40 A"/>
    <property type="chains" value="BB/DB=7-240"/>
</dbReference>
<dbReference type="PDB" id="4W29">
    <property type="method" value="X-ray"/>
    <property type="resolution" value="3.80 A"/>
    <property type="chains" value="AB/CB=7-241"/>
</dbReference>
<dbReference type="PDB" id="4XEJ">
    <property type="method" value="X-ray"/>
    <property type="resolution" value="3.80 A"/>
    <property type="chains" value="AS02/BS02=7-240"/>
</dbReference>
<dbReference type="PDB" id="5J4D">
    <property type="method" value="X-ray"/>
    <property type="resolution" value="3.10 A"/>
    <property type="chains" value="KA/PC=1-256"/>
</dbReference>
<dbReference type="PDB" id="5V8I">
    <property type="method" value="X-ray"/>
    <property type="resolution" value="3.25 A"/>
    <property type="chains" value="1b/2b=1-256"/>
</dbReference>
<dbReference type="PDB" id="6B4V">
    <property type="method" value="X-ray"/>
    <property type="resolution" value="3.40 A"/>
    <property type="chains" value="KA/OC=1-256"/>
</dbReference>
<dbReference type="PDB" id="6BOH">
    <property type="method" value="X-ray"/>
    <property type="resolution" value="3.40 A"/>
    <property type="chains" value="LA/QC=1-256"/>
</dbReference>
<dbReference type="PDB" id="6BOK">
    <property type="method" value="X-ray"/>
    <property type="resolution" value="3.55 A"/>
    <property type="chains" value="JA/MC=1-256"/>
</dbReference>
<dbReference type="PDB" id="6N1D">
    <property type="method" value="X-ray"/>
    <property type="resolution" value="3.20 A"/>
    <property type="chains" value="AS02/BS02=2-256"/>
</dbReference>
<dbReference type="PDBsum" id="4KVB"/>
<dbReference type="PDBsum" id="4V4G"/>
<dbReference type="PDBsum" id="4V4I"/>
<dbReference type="PDBsum" id="4V4J"/>
<dbReference type="PDBsum" id="4V63"/>
<dbReference type="PDBsum" id="4V67"/>
<dbReference type="PDBsum" id="4V7P"/>
<dbReference type="PDBsum" id="4V83"/>
<dbReference type="PDBsum" id="4V84"/>
<dbReference type="PDBsum" id="4V9J"/>
<dbReference type="PDBsum" id="4V9K"/>
<dbReference type="PDBsum" id="4V9L"/>
<dbReference type="PDBsum" id="4V9M"/>
<dbReference type="PDBsum" id="4V9N"/>
<dbReference type="PDBsum" id="4V9Q"/>
<dbReference type="PDBsum" id="4W29"/>
<dbReference type="PDBsum" id="4XEJ"/>
<dbReference type="PDBsum" id="5J4D"/>
<dbReference type="PDBsum" id="5V8I"/>
<dbReference type="PDBsum" id="6B4V"/>
<dbReference type="PDBsum" id="6BOH"/>
<dbReference type="PDBsum" id="6BOK"/>
<dbReference type="PDBsum" id="6N1D"/>
<dbReference type="SMR" id="P62662"/>
<dbReference type="IntAct" id="P62662">
    <property type="interactions" value="4"/>
</dbReference>
<dbReference type="DrugBank" id="DB08185">
    <property type="generic name" value="2-METHYLTHIO-N6-ISOPENTENYL-ADENOSINE-5'-MONOPHOSPHATE"/>
</dbReference>
<dbReference type="GeneID" id="3170121"/>
<dbReference type="KEGG" id="tth:TT_C0509"/>
<dbReference type="eggNOG" id="COG0052">
    <property type="taxonomic scope" value="Bacteria"/>
</dbReference>
<dbReference type="HOGENOM" id="CLU_040318_1_2_0"/>
<dbReference type="OrthoDB" id="9808036at2"/>
<dbReference type="EvolutionaryTrace" id="P62662"/>
<dbReference type="Proteomes" id="UP000000592">
    <property type="component" value="Chromosome"/>
</dbReference>
<dbReference type="GO" id="GO:0022627">
    <property type="term" value="C:cytosolic small ribosomal subunit"/>
    <property type="evidence" value="ECO:0007669"/>
    <property type="project" value="TreeGrafter"/>
</dbReference>
<dbReference type="GO" id="GO:0019843">
    <property type="term" value="F:rRNA binding"/>
    <property type="evidence" value="ECO:0007669"/>
    <property type="project" value="UniProtKB-KW"/>
</dbReference>
<dbReference type="GO" id="GO:0003735">
    <property type="term" value="F:structural constituent of ribosome"/>
    <property type="evidence" value="ECO:0007669"/>
    <property type="project" value="InterPro"/>
</dbReference>
<dbReference type="GO" id="GO:0006412">
    <property type="term" value="P:translation"/>
    <property type="evidence" value="ECO:0007669"/>
    <property type="project" value="UniProtKB-UniRule"/>
</dbReference>
<dbReference type="CDD" id="cd01425">
    <property type="entry name" value="RPS2"/>
    <property type="match status" value="1"/>
</dbReference>
<dbReference type="FunFam" id="1.10.287.610:FF:000001">
    <property type="entry name" value="30S ribosomal protein S2"/>
    <property type="match status" value="1"/>
</dbReference>
<dbReference type="Gene3D" id="3.40.50.10490">
    <property type="entry name" value="Glucose-6-phosphate isomerase like protein, domain 1"/>
    <property type="match status" value="1"/>
</dbReference>
<dbReference type="Gene3D" id="1.10.287.610">
    <property type="entry name" value="Helix hairpin bin"/>
    <property type="match status" value="1"/>
</dbReference>
<dbReference type="HAMAP" id="MF_00291_B">
    <property type="entry name" value="Ribosomal_uS2_B"/>
    <property type="match status" value="1"/>
</dbReference>
<dbReference type="InterPro" id="IPR001865">
    <property type="entry name" value="Ribosomal_uS2"/>
</dbReference>
<dbReference type="InterPro" id="IPR005706">
    <property type="entry name" value="Ribosomal_uS2_bac/mit/plastid"/>
</dbReference>
<dbReference type="InterPro" id="IPR018130">
    <property type="entry name" value="Ribosomal_uS2_CS"/>
</dbReference>
<dbReference type="InterPro" id="IPR023591">
    <property type="entry name" value="Ribosomal_uS2_flav_dom_sf"/>
</dbReference>
<dbReference type="NCBIfam" id="TIGR01011">
    <property type="entry name" value="rpsB_bact"/>
    <property type="match status" value="1"/>
</dbReference>
<dbReference type="PANTHER" id="PTHR12534">
    <property type="entry name" value="30S RIBOSOMAL PROTEIN S2 PROKARYOTIC AND ORGANELLAR"/>
    <property type="match status" value="1"/>
</dbReference>
<dbReference type="PANTHER" id="PTHR12534:SF0">
    <property type="entry name" value="SMALL RIBOSOMAL SUBUNIT PROTEIN US2M"/>
    <property type="match status" value="1"/>
</dbReference>
<dbReference type="Pfam" id="PF00318">
    <property type="entry name" value="Ribosomal_S2"/>
    <property type="match status" value="1"/>
</dbReference>
<dbReference type="PRINTS" id="PR00395">
    <property type="entry name" value="RIBOSOMALS2"/>
</dbReference>
<dbReference type="SUPFAM" id="SSF52313">
    <property type="entry name" value="Ribosomal protein S2"/>
    <property type="match status" value="1"/>
</dbReference>
<dbReference type="PROSITE" id="PS00962">
    <property type="entry name" value="RIBOSOMAL_S2_1"/>
    <property type="match status" value="1"/>
</dbReference>
<sequence>MPVEITVKELLEAGVHFGHERKRWNPKFARYIYAERNGIHIIDLQKTMEELERTFRFIEDLAMRGGTILFVGTKKQAQDIVRMEAERAGMPYVNQRWLGGMLTNFKTISQRVHRLEELEALFASPEIEERPKKEQVRLKHELERLQKYLSGFRLLKRLPDAIFVVDPTKEAIAVREARKLFIPVIALADTDSDPDLVDYIIPGNDDAIRSIQLILSRAVDLIIQARGGVVEPSPSYALVQEAEATETPEGESEVEA</sequence>
<organism>
    <name type="scientific">Thermus thermophilus (strain ATCC BAA-163 / DSM 7039 / HB27)</name>
    <dbReference type="NCBI Taxonomy" id="262724"/>
    <lineage>
        <taxon>Bacteria</taxon>
        <taxon>Thermotogati</taxon>
        <taxon>Deinococcota</taxon>
        <taxon>Deinococci</taxon>
        <taxon>Thermales</taxon>
        <taxon>Thermaceae</taxon>
        <taxon>Thermus</taxon>
    </lineage>
</organism>
<accession>P62662</accession>
<gene>
    <name type="primary">rpsB</name>
    <name type="synonym">rps2</name>
    <name type="ordered locus">TT_C0509</name>
</gene>
<keyword id="KW-0002">3D-structure</keyword>
<keyword id="KW-0175">Coiled coil</keyword>
<keyword id="KW-0687">Ribonucleoprotein</keyword>
<keyword id="KW-0689">Ribosomal protein</keyword>
<keyword id="KW-0694">RNA-binding</keyword>
<keyword id="KW-0699">rRNA-binding</keyword>
<evidence type="ECO:0000250" key="1"/>
<evidence type="ECO:0000305" key="2"/>
<evidence type="ECO:0007829" key="3">
    <source>
        <dbReference type="PDB" id="4V63"/>
    </source>
</evidence>
<evidence type="ECO:0007829" key="4">
    <source>
        <dbReference type="PDB" id="4V67"/>
    </source>
</evidence>
<evidence type="ECO:0007829" key="5">
    <source>
        <dbReference type="PDB" id="4V84"/>
    </source>
</evidence>
<evidence type="ECO:0007829" key="6">
    <source>
        <dbReference type="PDB" id="4V9K"/>
    </source>
</evidence>
<evidence type="ECO:0007829" key="7">
    <source>
        <dbReference type="PDB" id="4V9L"/>
    </source>
</evidence>
<protein>
    <recommendedName>
        <fullName evidence="2">Small ribosomal subunit protein uS2</fullName>
    </recommendedName>
    <alternativeName>
        <fullName>30S ribosomal protein S2</fullName>
    </alternativeName>
</protein>
<name>RS2_THET2</name>
<comment type="function">
    <text evidence="1">Spans the head-body hinge region of the 30S subunit. Is loosely associated with the 30S subunit (By similarity).</text>
</comment>
<comment type="subunit">
    <text evidence="1">Part of the 30S ribosomal subunit. Contacts protein S8 (By similarity).</text>
</comment>
<comment type="similarity">
    <text evidence="2">Belongs to the universal ribosomal protein uS2 family.</text>
</comment>
<proteinExistence type="evidence at protein level"/>
<feature type="initiator methionine" description="Removed" evidence="1">
    <location>
        <position position="1"/>
    </location>
</feature>
<feature type="chain" id="PRO_0000134263" description="Small ribosomal subunit protein uS2">
    <location>
        <begin position="2"/>
        <end position="256"/>
    </location>
</feature>
<feature type="coiled-coil region">
    <location>
        <begin position="104"/>
        <end position="149"/>
    </location>
</feature>
<feature type="helix" evidence="4">
    <location>
        <begin position="8"/>
        <end position="13"/>
    </location>
</feature>
<feature type="turn" evidence="4">
    <location>
        <begin position="14"/>
        <end position="16"/>
    </location>
</feature>
<feature type="strand" evidence="6">
    <location>
        <begin position="20"/>
        <end position="22"/>
    </location>
</feature>
<feature type="helix" evidence="4">
    <location>
        <begin position="28"/>
        <end position="31"/>
    </location>
</feature>
<feature type="strand" evidence="4">
    <location>
        <begin position="32"/>
        <end position="36"/>
    </location>
</feature>
<feature type="strand" evidence="4">
    <location>
        <begin position="39"/>
        <end position="42"/>
    </location>
</feature>
<feature type="helix" evidence="4">
    <location>
        <begin position="44"/>
        <end position="63"/>
    </location>
</feature>
<feature type="strand" evidence="4">
    <location>
        <begin position="68"/>
        <end position="71"/>
    </location>
</feature>
<feature type="helix" evidence="4">
    <location>
        <begin position="75"/>
        <end position="77"/>
    </location>
</feature>
<feature type="helix" evidence="4">
    <location>
        <begin position="78"/>
        <end position="86"/>
    </location>
</feature>
<feature type="turn" evidence="4">
    <location>
        <begin position="87"/>
        <end position="89"/>
    </location>
</feature>
<feature type="turn" evidence="5">
    <location>
        <begin position="101"/>
        <end position="104"/>
    </location>
</feature>
<feature type="helix" evidence="4">
    <location>
        <begin position="105"/>
        <end position="121"/>
    </location>
</feature>
<feature type="strand" evidence="6">
    <location>
        <begin position="123"/>
        <end position="125"/>
    </location>
</feature>
<feature type="strand" evidence="3">
    <location>
        <begin position="128"/>
        <end position="130"/>
    </location>
</feature>
<feature type="helix" evidence="4">
    <location>
        <begin position="132"/>
        <end position="149"/>
    </location>
</feature>
<feature type="turn" evidence="4">
    <location>
        <begin position="150"/>
        <end position="154"/>
    </location>
</feature>
<feature type="strand" evidence="4">
    <location>
        <begin position="160"/>
        <end position="165"/>
    </location>
</feature>
<feature type="turn" evidence="4">
    <location>
        <begin position="167"/>
        <end position="170"/>
    </location>
</feature>
<feature type="helix" evidence="4">
    <location>
        <begin position="171"/>
        <end position="179"/>
    </location>
</feature>
<feature type="strand" evidence="4">
    <location>
        <begin position="184"/>
        <end position="188"/>
    </location>
</feature>
<feature type="strand" evidence="3">
    <location>
        <begin position="190"/>
        <end position="192"/>
    </location>
</feature>
<feature type="helix" evidence="4">
    <location>
        <begin position="194"/>
        <end position="196"/>
    </location>
</feature>
<feature type="strand" evidence="4">
    <location>
        <begin position="198"/>
        <end position="203"/>
    </location>
</feature>
<feature type="strand" evidence="7">
    <location>
        <begin position="205"/>
        <end position="207"/>
    </location>
</feature>
<feature type="helix" evidence="4">
    <location>
        <begin position="208"/>
        <end position="226"/>
    </location>
</feature>
<feature type="helix" evidence="4">
    <location>
        <begin position="236"/>
        <end position="239"/>
    </location>
</feature>
<reference key="1">
    <citation type="journal article" date="2001" name="EMBO J.">
        <title>Crystal structures of complexes of the small ribosomal subunit with tetracycline, edeine and IF3.</title>
        <authorList>
            <person name="Pioletti M."/>
            <person name="Schluenzen F."/>
            <person name="Harms J."/>
            <person name="Zarivach R."/>
            <person name="Gluehmann M."/>
            <person name="Avila H."/>
            <person name="Bashan A."/>
            <person name="Bartels H."/>
            <person name="Auerbach T."/>
            <person name="Jacobi C."/>
            <person name="Hartsch T."/>
            <person name="Yonath A."/>
            <person name="Franceschi F."/>
        </authorList>
    </citation>
    <scope>NUCLEOTIDE SEQUENCE [GENOMIC DNA]</scope>
</reference>
<reference key="2">
    <citation type="journal article" date="2004" name="Nat. Biotechnol.">
        <title>The genome sequence of the extreme thermophile Thermus thermophilus.</title>
        <authorList>
            <person name="Henne A."/>
            <person name="Brueggemann H."/>
            <person name="Raasch C."/>
            <person name="Wiezer A."/>
            <person name="Hartsch T."/>
            <person name="Liesegang H."/>
            <person name="Johann A."/>
            <person name="Lienard T."/>
            <person name="Gohl O."/>
            <person name="Martinez-Arias R."/>
            <person name="Jacobi C."/>
            <person name="Starkuviene V."/>
            <person name="Schlenczeck S."/>
            <person name="Dencker S."/>
            <person name="Huber R."/>
            <person name="Klenk H.-P."/>
            <person name="Kramer W."/>
            <person name="Merkl R."/>
            <person name="Gottschalk G."/>
            <person name="Fritz H.-J."/>
        </authorList>
    </citation>
    <scope>NUCLEOTIDE SEQUENCE [LARGE SCALE GENOMIC DNA]</scope>
    <source>
        <strain>ATCC BAA-163 / DSM 7039 / HB27</strain>
    </source>
</reference>